<gene>
    <name type="ordered locus">STH1872</name>
</gene>
<comment type="function">
    <text evidence="1">Catalyzes the decarboxylative condensation of pimeloyl-[acyl-carrier protein] and L-alanine to produce 8-amino-7-oxononanoate (AON), [acyl-carrier protein], and carbon dioxide.</text>
</comment>
<comment type="catalytic activity">
    <reaction>
        <text>6-carboxyhexanoyl-[ACP] + L-alanine + H(+) = (8S)-8-amino-7-oxononanoate + holo-[ACP] + CO2</text>
        <dbReference type="Rhea" id="RHEA:42288"/>
        <dbReference type="Rhea" id="RHEA-COMP:9685"/>
        <dbReference type="Rhea" id="RHEA-COMP:9955"/>
        <dbReference type="ChEBI" id="CHEBI:15378"/>
        <dbReference type="ChEBI" id="CHEBI:16526"/>
        <dbReference type="ChEBI" id="CHEBI:57972"/>
        <dbReference type="ChEBI" id="CHEBI:64479"/>
        <dbReference type="ChEBI" id="CHEBI:78846"/>
        <dbReference type="ChEBI" id="CHEBI:149468"/>
        <dbReference type="EC" id="2.3.1.47"/>
    </reaction>
</comment>
<comment type="cofactor">
    <cofactor evidence="1">
        <name>pyridoxal 5'-phosphate</name>
        <dbReference type="ChEBI" id="CHEBI:597326"/>
    </cofactor>
</comment>
<comment type="pathway">
    <text>Cofactor biosynthesis; biotin biosynthesis.</text>
</comment>
<comment type="subunit">
    <text evidence="1">Homodimer.</text>
</comment>
<comment type="similarity">
    <text evidence="2">Belongs to the class-II pyridoxal-phosphate-dependent aminotransferase family. BioF subfamily.</text>
</comment>
<name>BIOF_SYMTH</name>
<feature type="chain" id="PRO_0000381117" description="8-amino-7-oxononanoate synthase">
    <location>
        <begin position="1"/>
        <end position="392"/>
    </location>
</feature>
<feature type="binding site" evidence="1">
    <location>
        <position position="21"/>
    </location>
    <ligand>
        <name>substrate</name>
    </ligand>
</feature>
<feature type="binding site" evidence="1">
    <location>
        <begin position="108"/>
        <end position="109"/>
    </location>
    <ligand>
        <name>pyridoxal 5'-phosphate</name>
        <dbReference type="ChEBI" id="CHEBI:597326"/>
    </ligand>
</feature>
<feature type="binding site" evidence="1">
    <location>
        <position position="133"/>
    </location>
    <ligand>
        <name>substrate</name>
    </ligand>
</feature>
<feature type="binding site" evidence="1">
    <location>
        <position position="181"/>
    </location>
    <ligand>
        <name>pyridoxal 5'-phosphate</name>
        <dbReference type="ChEBI" id="CHEBI:597326"/>
    </ligand>
</feature>
<feature type="binding site" evidence="1">
    <location>
        <begin position="206"/>
        <end position="209"/>
    </location>
    <ligand>
        <name>pyridoxal 5'-phosphate</name>
        <dbReference type="ChEBI" id="CHEBI:597326"/>
    </ligand>
</feature>
<feature type="binding site" evidence="1">
    <location>
        <begin position="237"/>
        <end position="240"/>
    </location>
    <ligand>
        <name>pyridoxal 5'-phosphate</name>
        <dbReference type="ChEBI" id="CHEBI:597326"/>
    </ligand>
</feature>
<feature type="binding site" evidence="1">
    <location>
        <position position="354"/>
    </location>
    <ligand>
        <name>substrate</name>
    </ligand>
</feature>
<feature type="modified residue" description="N6-(pyridoxal phosphate)lysine" evidence="1">
    <location>
        <position position="240"/>
    </location>
</feature>
<accession>Q67N86</accession>
<keyword id="KW-0012">Acyltransferase</keyword>
<keyword id="KW-0093">Biotin biosynthesis</keyword>
<keyword id="KW-0663">Pyridoxal phosphate</keyword>
<keyword id="KW-1185">Reference proteome</keyword>
<keyword id="KW-0808">Transferase</keyword>
<organism>
    <name type="scientific">Symbiobacterium thermophilum (strain DSM 24528 / JCM 14929 / IAM 14863 / T)</name>
    <dbReference type="NCBI Taxonomy" id="292459"/>
    <lineage>
        <taxon>Bacteria</taxon>
        <taxon>Bacillati</taxon>
        <taxon>Bacillota</taxon>
        <taxon>Clostridia</taxon>
        <taxon>Eubacteriales</taxon>
        <taxon>Symbiobacteriaceae</taxon>
        <taxon>Symbiobacterium</taxon>
    </lineage>
</organism>
<evidence type="ECO:0000250" key="1"/>
<evidence type="ECO:0000305" key="2"/>
<sequence>MALTDFLVEELNGLKQAGLYRPLKELQSPQRPRSIIDGREVINLSSNNYLGLADDPRLKQAMIEATEAYGAGSGAVRTIIGTMTIHNQLEQKLAEFKHVEAAVVFQSGFTCNSGVIPVLVGEGDAVISDELNHASIIDGCRLSKAKIHRYKHADMDDLARVLKETDGQYRRRLIITDGVFSMDGDIAPLPDIVELAEKHGCMTYVDDAHSSGVLGKNGRGSVNHFGLDGRVTVQVGTLSKAVGVLGGYVAGPRALIELLWHKGRPFLFSTSHPPGVAAACLKAIEIMEQEPERIDRLWENTRYFKERLTELGFDTGKSETPITPVIVGDEVKAMQLSDRLLEEGVFAQGIAFPTVPRGKARVRTIVTAAHTKEDLDEALAAFAKVGRELGLI</sequence>
<proteinExistence type="inferred from homology"/>
<dbReference type="EC" id="2.3.1.47"/>
<dbReference type="EMBL" id="AP006840">
    <property type="protein sequence ID" value="BAD40857.1"/>
    <property type="molecule type" value="Genomic_DNA"/>
</dbReference>
<dbReference type="RefSeq" id="WP_011195999.1">
    <property type="nucleotide sequence ID" value="NC_006177.1"/>
</dbReference>
<dbReference type="SMR" id="Q67N86"/>
<dbReference type="STRING" id="292459.STH1872"/>
<dbReference type="KEGG" id="sth:STH1872"/>
<dbReference type="eggNOG" id="COG0156">
    <property type="taxonomic scope" value="Bacteria"/>
</dbReference>
<dbReference type="HOGENOM" id="CLU_015846_11_0_9"/>
<dbReference type="OrthoDB" id="9807157at2"/>
<dbReference type="UniPathway" id="UPA00078"/>
<dbReference type="Proteomes" id="UP000000417">
    <property type="component" value="Chromosome"/>
</dbReference>
<dbReference type="GO" id="GO:0008710">
    <property type="term" value="F:8-amino-7-oxononanoate synthase activity"/>
    <property type="evidence" value="ECO:0000250"/>
    <property type="project" value="UniProtKB"/>
</dbReference>
<dbReference type="GO" id="GO:0008890">
    <property type="term" value="F:glycine C-acetyltransferase activity"/>
    <property type="evidence" value="ECO:0000250"/>
    <property type="project" value="UniProtKB"/>
</dbReference>
<dbReference type="GO" id="GO:0030170">
    <property type="term" value="F:pyridoxal phosphate binding"/>
    <property type="evidence" value="ECO:0000250"/>
    <property type="project" value="UniProtKB"/>
</dbReference>
<dbReference type="GO" id="GO:0009102">
    <property type="term" value="P:biotin biosynthetic process"/>
    <property type="evidence" value="ECO:0000250"/>
    <property type="project" value="UniProtKB"/>
</dbReference>
<dbReference type="CDD" id="cd06454">
    <property type="entry name" value="KBL_like"/>
    <property type="match status" value="1"/>
</dbReference>
<dbReference type="FunFam" id="3.90.1150.10:FF:000004">
    <property type="entry name" value="2-amino-3-ketobutyrate coenzyme A ligase"/>
    <property type="match status" value="1"/>
</dbReference>
<dbReference type="FunFam" id="3.40.640.10:FF:000006">
    <property type="entry name" value="5-aminolevulinate synthase, mitochondrial"/>
    <property type="match status" value="1"/>
</dbReference>
<dbReference type="Gene3D" id="3.90.1150.10">
    <property type="entry name" value="Aspartate Aminotransferase, domain 1"/>
    <property type="match status" value="1"/>
</dbReference>
<dbReference type="Gene3D" id="3.40.640.10">
    <property type="entry name" value="Type I PLP-dependent aspartate aminotransferase-like (Major domain)"/>
    <property type="match status" value="1"/>
</dbReference>
<dbReference type="InterPro" id="IPR001917">
    <property type="entry name" value="Aminotrans_II_pyridoxalP_BS"/>
</dbReference>
<dbReference type="InterPro" id="IPR004839">
    <property type="entry name" value="Aminotransferase_I/II_large"/>
</dbReference>
<dbReference type="InterPro" id="IPR050087">
    <property type="entry name" value="AON_synthase_class-II"/>
</dbReference>
<dbReference type="InterPro" id="IPR010962">
    <property type="entry name" value="AONS_Archaea/Firmicutes"/>
</dbReference>
<dbReference type="InterPro" id="IPR004723">
    <property type="entry name" value="AONS_Archaea/Proteobacteria"/>
</dbReference>
<dbReference type="InterPro" id="IPR015424">
    <property type="entry name" value="PyrdxlP-dep_Trfase"/>
</dbReference>
<dbReference type="InterPro" id="IPR015421">
    <property type="entry name" value="PyrdxlP-dep_Trfase_major"/>
</dbReference>
<dbReference type="InterPro" id="IPR015422">
    <property type="entry name" value="PyrdxlP-dep_Trfase_small"/>
</dbReference>
<dbReference type="NCBIfam" id="TIGR00858">
    <property type="entry name" value="bioF"/>
    <property type="match status" value="1"/>
</dbReference>
<dbReference type="NCBIfam" id="TIGR01825">
    <property type="entry name" value="gly_Cac_T_rel"/>
    <property type="match status" value="1"/>
</dbReference>
<dbReference type="NCBIfam" id="NF005394">
    <property type="entry name" value="PRK06939.1"/>
    <property type="match status" value="1"/>
</dbReference>
<dbReference type="PANTHER" id="PTHR13693">
    <property type="entry name" value="CLASS II AMINOTRANSFERASE/8-AMINO-7-OXONONANOATE SYNTHASE"/>
    <property type="match status" value="1"/>
</dbReference>
<dbReference type="PANTHER" id="PTHR13693:SF3">
    <property type="entry name" value="LD36009P"/>
    <property type="match status" value="1"/>
</dbReference>
<dbReference type="Pfam" id="PF00155">
    <property type="entry name" value="Aminotran_1_2"/>
    <property type="match status" value="1"/>
</dbReference>
<dbReference type="SUPFAM" id="SSF53383">
    <property type="entry name" value="PLP-dependent transferases"/>
    <property type="match status" value="1"/>
</dbReference>
<dbReference type="PROSITE" id="PS00599">
    <property type="entry name" value="AA_TRANSFER_CLASS_2"/>
    <property type="match status" value="1"/>
</dbReference>
<protein>
    <recommendedName>
        <fullName>8-amino-7-oxononanoate synthase</fullName>
        <shortName>AONS</shortName>
        <ecNumber>2.3.1.47</ecNumber>
    </recommendedName>
    <alternativeName>
        <fullName>7-keto-8-amino-pelargonic acid synthase</fullName>
        <shortName>7-KAP synthase</shortName>
        <shortName>KAPA synthase</shortName>
    </alternativeName>
    <alternativeName>
        <fullName>8-amino-7-ketopelargonate synthase</fullName>
    </alternativeName>
    <alternativeName>
        <fullName>Alpha-oxoamine synthase</fullName>
    </alternativeName>
</protein>
<reference key="1">
    <citation type="journal article" date="2004" name="Nucleic Acids Res.">
        <title>Genome sequence of Symbiobacterium thermophilum, an uncultivable bacterium that depends on microbial commensalism.</title>
        <authorList>
            <person name="Ueda K."/>
            <person name="Yamashita A."/>
            <person name="Ishikawa J."/>
            <person name="Shimada M."/>
            <person name="Watsuji T."/>
            <person name="Morimura K."/>
            <person name="Ikeda H."/>
            <person name="Hattori M."/>
            <person name="Beppu T."/>
        </authorList>
    </citation>
    <scope>NUCLEOTIDE SEQUENCE [LARGE SCALE GENOMIC DNA]</scope>
    <source>
        <strain>DSM 24528 / JCM 14929 / IAM 14863 / T</strain>
    </source>
</reference>